<name>ISPF_RHOOB</name>
<proteinExistence type="inferred from homology"/>
<organism>
    <name type="scientific">Rhodococcus opacus (strain B4)</name>
    <dbReference type="NCBI Taxonomy" id="632772"/>
    <lineage>
        <taxon>Bacteria</taxon>
        <taxon>Bacillati</taxon>
        <taxon>Actinomycetota</taxon>
        <taxon>Actinomycetes</taxon>
        <taxon>Mycobacteriales</taxon>
        <taxon>Nocardiaceae</taxon>
        <taxon>Rhodococcus</taxon>
    </lineage>
</organism>
<keyword id="KW-0414">Isoprene biosynthesis</keyword>
<keyword id="KW-0456">Lyase</keyword>
<keyword id="KW-0479">Metal-binding</keyword>
<dbReference type="EC" id="4.6.1.12" evidence="1"/>
<dbReference type="EMBL" id="AP011115">
    <property type="protein sequence ID" value="BAH52626.1"/>
    <property type="molecule type" value="Genomic_DNA"/>
</dbReference>
<dbReference type="RefSeq" id="WP_012691551.1">
    <property type="nucleotide sequence ID" value="NC_012522.1"/>
</dbReference>
<dbReference type="SMR" id="C1BAC3"/>
<dbReference type="STRING" id="632772.ROP_43790"/>
<dbReference type="KEGG" id="rop:ROP_43790"/>
<dbReference type="PATRIC" id="fig|632772.20.peg.4586"/>
<dbReference type="HOGENOM" id="CLU_084630_1_0_11"/>
<dbReference type="OrthoDB" id="9804336at2"/>
<dbReference type="UniPathway" id="UPA00056">
    <property type="reaction ID" value="UER00095"/>
</dbReference>
<dbReference type="Proteomes" id="UP000002212">
    <property type="component" value="Chromosome"/>
</dbReference>
<dbReference type="GO" id="GO:0008685">
    <property type="term" value="F:2-C-methyl-D-erythritol 2,4-cyclodiphosphate synthase activity"/>
    <property type="evidence" value="ECO:0007669"/>
    <property type="project" value="UniProtKB-UniRule"/>
</dbReference>
<dbReference type="GO" id="GO:0046872">
    <property type="term" value="F:metal ion binding"/>
    <property type="evidence" value="ECO:0007669"/>
    <property type="project" value="UniProtKB-KW"/>
</dbReference>
<dbReference type="GO" id="GO:0019288">
    <property type="term" value="P:isopentenyl diphosphate biosynthetic process, methylerythritol 4-phosphate pathway"/>
    <property type="evidence" value="ECO:0007669"/>
    <property type="project" value="UniProtKB-UniRule"/>
</dbReference>
<dbReference type="GO" id="GO:0016114">
    <property type="term" value="P:terpenoid biosynthetic process"/>
    <property type="evidence" value="ECO:0007669"/>
    <property type="project" value="InterPro"/>
</dbReference>
<dbReference type="CDD" id="cd00554">
    <property type="entry name" value="MECDP_synthase"/>
    <property type="match status" value="1"/>
</dbReference>
<dbReference type="FunFam" id="3.30.1330.50:FF:000003">
    <property type="entry name" value="2-C-methyl-D-erythritol 2,4-cyclodiphosphate synthase"/>
    <property type="match status" value="1"/>
</dbReference>
<dbReference type="Gene3D" id="3.30.1330.50">
    <property type="entry name" value="2-C-methyl-D-erythritol 2,4-cyclodiphosphate synthase"/>
    <property type="match status" value="1"/>
</dbReference>
<dbReference type="HAMAP" id="MF_00107">
    <property type="entry name" value="IspF"/>
    <property type="match status" value="1"/>
</dbReference>
<dbReference type="InterPro" id="IPR003526">
    <property type="entry name" value="MECDP_synthase"/>
</dbReference>
<dbReference type="InterPro" id="IPR020555">
    <property type="entry name" value="MECDP_synthase_CS"/>
</dbReference>
<dbReference type="InterPro" id="IPR036571">
    <property type="entry name" value="MECDP_synthase_sf"/>
</dbReference>
<dbReference type="NCBIfam" id="TIGR00151">
    <property type="entry name" value="ispF"/>
    <property type="match status" value="1"/>
</dbReference>
<dbReference type="PANTHER" id="PTHR43181">
    <property type="entry name" value="2-C-METHYL-D-ERYTHRITOL 2,4-CYCLODIPHOSPHATE SYNTHASE, CHLOROPLASTIC"/>
    <property type="match status" value="1"/>
</dbReference>
<dbReference type="PANTHER" id="PTHR43181:SF1">
    <property type="entry name" value="2-C-METHYL-D-ERYTHRITOL 2,4-CYCLODIPHOSPHATE SYNTHASE, CHLOROPLASTIC"/>
    <property type="match status" value="1"/>
</dbReference>
<dbReference type="Pfam" id="PF02542">
    <property type="entry name" value="YgbB"/>
    <property type="match status" value="1"/>
</dbReference>
<dbReference type="SUPFAM" id="SSF69765">
    <property type="entry name" value="IpsF-like"/>
    <property type="match status" value="1"/>
</dbReference>
<dbReference type="PROSITE" id="PS01350">
    <property type="entry name" value="ISPF"/>
    <property type="match status" value="1"/>
</dbReference>
<sequence>MRVGIGTDVHPIEQGRPCWMAGLLFEDENGCAGHSDGDVAVHALCDALLSAAGLGDLGSVFGTGRPEWSGVSGAAMLAEVRRLLEQDDFGVANAAVQVIGNRPKIGPRRNEAQKVLSDILGAPVSVSATTTDGLGLTGRGEGIAAMATALVIPDRSAR</sequence>
<accession>C1BAC3</accession>
<protein>
    <recommendedName>
        <fullName evidence="1">2-C-methyl-D-erythritol 2,4-cyclodiphosphate synthase</fullName>
        <shortName evidence="1">MECDP-synthase</shortName>
        <shortName evidence="1">MECPP-synthase</shortName>
        <shortName evidence="1">MECPS</shortName>
        <ecNumber evidence="1">4.6.1.12</ecNumber>
    </recommendedName>
</protein>
<comment type="function">
    <text evidence="1">Involved in the biosynthesis of isopentenyl diphosphate (IPP) and dimethylallyl diphosphate (DMAPP), two major building blocks of isoprenoid compounds. Catalyzes the conversion of 4-diphosphocytidyl-2-C-methyl-D-erythritol 2-phosphate (CDP-ME2P) to 2-C-methyl-D-erythritol 2,4-cyclodiphosphate (ME-CPP) with a corresponding release of cytidine 5-monophosphate (CMP).</text>
</comment>
<comment type="catalytic activity">
    <reaction evidence="1">
        <text>4-CDP-2-C-methyl-D-erythritol 2-phosphate = 2-C-methyl-D-erythritol 2,4-cyclic diphosphate + CMP</text>
        <dbReference type="Rhea" id="RHEA:23864"/>
        <dbReference type="ChEBI" id="CHEBI:57919"/>
        <dbReference type="ChEBI" id="CHEBI:58483"/>
        <dbReference type="ChEBI" id="CHEBI:60377"/>
        <dbReference type="EC" id="4.6.1.12"/>
    </reaction>
</comment>
<comment type="cofactor">
    <cofactor evidence="1">
        <name>a divalent metal cation</name>
        <dbReference type="ChEBI" id="CHEBI:60240"/>
    </cofactor>
    <text evidence="1">Binds 1 divalent metal cation per subunit.</text>
</comment>
<comment type="pathway">
    <text evidence="1">Isoprenoid biosynthesis; isopentenyl diphosphate biosynthesis via DXP pathway; isopentenyl diphosphate from 1-deoxy-D-xylulose 5-phosphate: step 4/6.</text>
</comment>
<comment type="subunit">
    <text evidence="1">Homotrimer.</text>
</comment>
<comment type="similarity">
    <text evidence="1">Belongs to the IspF family.</text>
</comment>
<reference key="1">
    <citation type="submission" date="2009-03" db="EMBL/GenBank/DDBJ databases">
        <title>Comparison of the complete genome sequences of Rhodococcus erythropolis PR4 and Rhodococcus opacus B4.</title>
        <authorList>
            <person name="Takarada H."/>
            <person name="Sekine M."/>
            <person name="Hosoyama A."/>
            <person name="Yamada R."/>
            <person name="Fujisawa T."/>
            <person name="Omata S."/>
            <person name="Shimizu A."/>
            <person name="Tsukatani N."/>
            <person name="Tanikawa S."/>
            <person name="Fujita N."/>
            <person name="Harayama S."/>
        </authorList>
    </citation>
    <scope>NUCLEOTIDE SEQUENCE [LARGE SCALE GENOMIC DNA]</scope>
    <source>
        <strain>B4</strain>
    </source>
</reference>
<evidence type="ECO:0000255" key="1">
    <source>
        <dbReference type="HAMAP-Rule" id="MF_00107"/>
    </source>
</evidence>
<feature type="chain" id="PRO_1000190717" description="2-C-methyl-D-erythritol 2,4-cyclodiphosphate synthase">
    <location>
        <begin position="1"/>
        <end position="158"/>
    </location>
</feature>
<feature type="binding site" evidence="1">
    <location>
        <begin position="8"/>
        <end position="10"/>
    </location>
    <ligand>
        <name>4-CDP-2-C-methyl-D-erythritol 2-phosphate</name>
        <dbReference type="ChEBI" id="CHEBI:57919"/>
    </ligand>
</feature>
<feature type="binding site" evidence="1">
    <location>
        <position position="8"/>
    </location>
    <ligand>
        <name>a divalent metal cation</name>
        <dbReference type="ChEBI" id="CHEBI:60240"/>
    </ligand>
</feature>
<feature type="binding site" evidence="1">
    <location>
        <position position="10"/>
    </location>
    <ligand>
        <name>a divalent metal cation</name>
        <dbReference type="ChEBI" id="CHEBI:60240"/>
    </ligand>
</feature>
<feature type="binding site" evidence="1">
    <location>
        <begin position="34"/>
        <end position="35"/>
    </location>
    <ligand>
        <name>4-CDP-2-C-methyl-D-erythritol 2-phosphate</name>
        <dbReference type="ChEBI" id="CHEBI:57919"/>
    </ligand>
</feature>
<feature type="binding site" evidence="1">
    <location>
        <position position="42"/>
    </location>
    <ligand>
        <name>a divalent metal cation</name>
        <dbReference type="ChEBI" id="CHEBI:60240"/>
    </ligand>
</feature>
<feature type="binding site" evidence="1">
    <location>
        <begin position="56"/>
        <end position="58"/>
    </location>
    <ligand>
        <name>4-CDP-2-C-methyl-D-erythritol 2-phosphate</name>
        <dbReference type="ChEBI" id="CHEBI:57919"/>
    </ligand>
</feature>
<feature type="binding site" evidence="1">
    <location>
        <begin position="129"/>
        <end position="132"/>
    </location>
    <ligand>
        <name>4-CDP-2-C-methyl-D-erythritol 2-phosphate</name>
        <dbReference type="ChEBI" id="CHEBI:57919"/>
    </ligand>
</feature>
<feature type="binding site" evidence="1">
    <location>
        <position position="139"/>
    </location>
    <ligand>
        <name>4-CDP-2-C-methyl-D-erythritol 2-phosphate</name>
        <dbReference type="ChEBI" id="CHEBI:57919"/>
    </ligand>
</feature>
<feature type="site" description="Transition state stabilizer" evidence="1">
    <location>
        <position position="34"/>
    </location>
</feature>
<feature type="site" description="Transition state stabilizer" evidence="1">
    <location>
        <position position="130"/>
    </location>
</feature>
<gene>
    <name evidence="1" type="primary">ispF</name>
    <name type="ordered locus">ROP_43790</name>
</gene>